<feature type="chain" id="PRO_0000135939" description="2,5-diamino-6-ribosylamino-4(3H)-pyrimidinone 5'-phosphate reductase">
    <location>
        <begin position="1"/>
        <end position="252"/>
    </location>
</feature>
<feature type="binding site" evidence="1">
    <location>
        <position position="80"/>
    </location>
    <ligand>
        <name>NADP(+)</name>
        <dbReference type="ChEBI" id="CHEBI:58349"/>
    </ligand>
</feature>
<feature type="binding site" evidence="1">
    <location>
        <position position="84"/>
    </location>
    <ligand>
        <name>NADP(+)</name>
        <dbReference type="ChEBI" id="CHEBI:58349"/>
    </ligand>
</feature>
<feature type="binding site" evidence="1">
    <location>
        <position position="166"/>
    </location>
    <ligand>
        <name>NADP(+)</name>
        <dbReference type="ChEBI" id="CHEBI:58349"/>
    </ligand>
</feature>
<feature type="binding site" evidence="1">
    <location>
        <begin position="189"/>
        <end position="193"/>
    </location>
    <ligand>
        <name>NADP(+)</name>
        <dbReference type="ChEBI" id="CHEBI:58349"/>
    </ligand>
</feature>
<comment type="function">
    <text evidence="1">Catalyzes an early step in riboflavin biosynthesis, the NADPH-dependent reduction of the ribose side chain of 2,5-diamino-6-ribosylamino-4(3H)-pyrimidinone 5'-phosphate, yielding 2,5-diamino-6-ribitylamino-4(3H)-pyrimidinone 5'-phosphate.</text>
</comment>
<comment type="catalytic activity">
    <reaction>
        <text>2,5-diamino-6-(1-D-ribitylamino)pyrimidin-4(3H)-one 5'-phosphate + NADP(+) = 2,5-diamino-6-(1-D-ribosylamino)pyrimidin-4(3H)-one 5'-phosphate + NADPH + H(+)</text>
        <dbReference type="Rhea" id="RHEA:27278"/>
        <dbReference type="ChEBI" id="CHEBI:15378"/>
        <dbReference type="ChEBI" id="CHEBI:57783"/>
        <dbReference type="ChEBI" id="CHEBI:58349"/>
        <dbReference type="ChEBI" id="CHEBI:58890"/>
        <dbReference type="ChEBI" id="CHEBI:59545"/>
        <dbReference type="EC" id="1.1.1.302"/>
    </reaction>
</comment>
<comment type="catalytic activity">
    <reaction>
        <text>2,5-diamino-6-(1-D-ribitylamino)pyrimidin-4(3H)-one 5'-phosphate + NAD(+) = 2,5-diamino-6-(1-D-ribosylamino)pyrimidin-4(3H)-one 5'-phosphate + NADH + H(+)</text>
        <dbReference type="Rhea" id="RHEA:27274"/>
        <dbReference type="ChEBI" id="CHEBI:15378"/>
        <dbReference type="ChEBI" id="CHEBI:57540"/>
        <dbReference type="ChEBI" id="CHEBI:57945"/>
        <dbReference type="ChEBI" id="CHEBI:58890"/>
        <dbReference type="ChEBI" id="CHEBI:59545"/>
        <dbReference type="EC" id="1.1.1.302"/>
    </reaction>
</comment>
<comment type="pathway">
    <text>Cofactor biosynthesis; riboflavin biosynthesis.</text>
</comment>
<comment type="subunit">
    <text evidence="1">Homodimer.</text>
</comment>
<comment type="similarity">
    <text evidence="2">Belongs to the HTP reductase family.</text>
</comment>
<name>RIB7_KLULA</name>
<evidence type="ECO:0000250" key="1"/>
<evidence type="ECO:0000305" key="2"/>
<protein>
    <recommendedName>
        <fullName>2,5-diamino-6-ribosylamino-4(3H)-pyrimidinone 5'-phosphate reductase</fullName>
        <shortName>DAROPP reductase</shortName>
        <shortName>DARP reductase</shortName>
        <ecNumber>1.1.1.302</ecNumber>
    </recommendedName>
    <alternativeName>
        <fullName>2,5-diamino-6-(5-phospho-D-ribosylamino)pyrimidin-4(3H)-one reductase</fullName>
    </alternativeName>
    <alternativeName>
        <fullName>2,5-diamino-6-ribitylamino-4(3H)-pyrimidinone 5'-phosphate synthase</fullName>
        <shortName>DARIPP synthase</shortName>
    </alternativeName>
</protein>
<organism>
    <name type="scientific">Kluyveromyces lactis (strain ATCC 8585 / CBS 2359 / DSM 70799 / NBRC 1267 / NRRL Y-1140 / WM37)</name>
    <name type="common">Yeast</name>
    <name type="synonym">Candida sphaerica</name>
    <dbReference type="NCBI Taxonomy" id="284590"/>
    <lineage>
        <taxon>Eukaryota</taxon>
        <taxon>Fungi</taxon>
        <taxon>Dikarya</taxon>
        <taxon>Ascomycota</taxon>
        <taxon>Saccharomycotina</taxon>
        <taxon>Saccharomycetes</taxon>
        <taxon>Saccharomycetales</taxon>
        <taxon>Saccharomycetaceae</taxon>
        <taxon>Kluyveromyces</taxon>
    </lineage>
</organism>
<gene>
    <name type="primary">RIB7</name>
    <name type="ordered locus">KLLA0F21120g</name>
</gene>
<sequence length="252" mass="28316">MPIQPLKKELVSFLEPYMPENAGVLGEQEKPYVILTYAQSLDARIAKIKGTRTIISHQETNTMTHYLRYKFDGIMLGCGTVLVDDPGLNCKWWPDDEPKPEHFAEHSPRPIILDPNGKWKFEGSKMKTLFDSGDGKAPIVVVKKLPEVVEENVDYLVMQTNFTGKVDWHDLFIQLKSQFGLKSIMVEGGGIVINDLLQRPHLIDALVITVGATFLGSEGVEVSPLIEINLKDISWWKGTRDSVLCSRLVSHS</sequence>
<keyword id="KW-0521">NADP</keyword>
<keyword id="KW-0560">Oxidoreductase</keyword>
<keyword id="KW-1185">Reference proteome</keyword>
<keyword id="KW-0686">Riboflavin biosynthesis</keyword>
<reference key="1">
    <citation type="journal article" date="2004" name="Nature">
        <title>Genome evolution in yeasts.</title>
        <authorList>
            <person name="Dujon B."/>
            <person name="Sherman D."/>
            <person name="Fischer G."/>
            <person name="Durrens P."/>
            <person name="Casaregola S."/>
            <person name="Lafontaine I."/>
            <person name="de Montigny J."/>
            <person name="Marck C."/>
            <person name="Neuveglise C."/>
            <person name="Talla E."/>
            <person name="Goffard N."/>
            <person name="Frangeul L."/>
            <person name="Aigle M."/>
            <person name="Anthouard V."/>
            <person name="Babour A."/>
            <person name="Barbe V."/>
            <person name="Barnay S."/>
            <person name="Blanchin S."/>
            <person name="Beckerich J.-M."/>
            <person name="Beyne E."/>
            <person name="Bleykasten C."/>
            <person name="Boisrame A."/>
            <person name="Boyer J."/>
            <person name="Cattolico L."/>
            <person name="Confanioleri F."/>
            <person name="de Daruvar A."/>
            <person name="Despons L."/>
            <person name="Fabre E."/>
            <person name="Fairhead C."/>
            <person name="Ferry-Dumazet H."/>
            <person name="Groppi A."/>
            <person name="Hantraye F."/>
            <person name="Hennequin C."/>
            <person name="Jauniaux N."/>
            <person name="Joyet P."/>
            <person name="Kachouri R."/>
            <person name="Kerrest A."/>
            <person name="Koszul R."/>
            <person name="Lemaire M."/>
            <person name="Lesur I."/>
            <person name="Ma L."/>
            <person name="Muller H."/>
            <person name="Nicaud J.-M."/>
            <person name="Nikolski M."/>
            <person name="Oztas S."/>
            <person name="Ozier-Kalogeropoulos O."/>
            <person name="Pellenz S."/>
            <person name="Potier S."/>
            <person name="Richard G.-F."/>
            <person name="Straub M.-L."/>
            <person name="Suleau A."/>
            <person name="Swennen D."/>
            <person name="Tekaia F."/>
            <person name="Wesolowski-Louvel M."/>
            <person name="Westhof E."/>
            <person name="Wirth B."/>
            <person name="Zeniou-Meyer M."/>
            <person name="Zivanovic Y."/>
            <person name="Bolotin-Fukuhara M."/>
            <person name="Thierry A."/>
            <person name="Bouchier C."/>
            <person name="Caudron B."/>
            <person name="Scarpelli C."/>
            <person name="Gaillardin C."/>
            <person name="Weissenbach J."/>
            <person name="Wincker P."/>
            <person name="Souciet J.-L."/>
        </authorList>
    </citation>
    <scope>NUCLEOTIDE SEQUENCE [LARGE SCALE GENOMIC DNA]</scope>
    <source>
        <strain>ATCC 8585 / CBS 2359 / DSM 70799 / NBRC 1267 / NRRL Y-1140 / WM37</strain>
    </source>
</reference>
<dbReference type="EC" id="1.1.1.302"/>
<dbReference type="EMBL" id="CR382126">
    <property type="protein sequence ID" value="CAG98736.1"/>
    <property type="molecule type" value="Genomic_DNA"/>
</dbReference>
<dbReference type="RefSeq" id="XP_456028.1">
    <property type="nucleotide sequence ID" value="XM_456028.1"/>
</dbReference>
<dbReference type="SMR" id="Q6CJ61"/>
<dbReference type="FunCoup" id="Q6CJ61">
    <property type="interactions" value="123"/>
</dbReference>
<dbReference type="STRING" id="284590.Q6CJ61"/>
<dbReference type="PaxDb" id="284590-Q6CJ61"/>
<dbReference type="KEGG" id="kla:KLLA0_F21120g"/>
<dbReference type="eggNOG" id="ENOG502RZWZ">
    <property type="taxonomic scope" value="Eukaryota"/>
</dbReference>
<dbReference type="HOGENOM" id="CLU_036590_5_0_1"/>
<dbReference type="InParanoid" id="Q6CJ61"/>
<dbReference type="OMA" id="HYLRYHH"/>
<dbReference type="UniPathway" id="UPA00275"/>
<dbReference type="Proteomes" id="UP000000598">
    <property type="component" value="Chromosome F"/>
</dbReference>
<dbReference type="GO" id="GO:0008703">
    <property type="term" value="F:5-amino-6-(5-phosphoribosylamino)uracil reductase activity"/>
    <property type="evidence" value="ECO:0007669"/>
    <property type="project" value="InterPro"/>
</dbReference>
<dbReference type="GO" id="GO:0050661">
    <property type="term" value="F:NADP binding"/>
    <property type="evidence" value="ECO:0007669"/>
    <property type="project" value="InterPro"/>
</dbReference>
<dbReference type="GO" id="GO:0009231">
    <property type="term" value="P:riboflavin biosynthetic process"/>
    <property type="evidence" value="ECO:0007669"/>
    <property type="project" value="UniProtKB-UniPathway"/>
</dbReference>
<dbReference type="FunFam" id="3.40.430.10:FF:000011">
    <property type="entry name" value="Rib7p"/>
    <property type="match status" value="1"/>
</dbReference>
<dbReference type="Gene3D" id="3.40.430.10">
    <property type="entry name" value="Dihydrofolate Reductase, subunit A"/>
    <property type="match status" value="1"/>
</dbReference>
<dbReference type="InterPro" id="IPR024072">
    <property type="entry name" value="DHFR-like_dom_sf"/>
</dbReference>
<dbReference type="InterPro" id="IPR011549">
    <property type="entry name" value="RibD_C"/>
</dbReference>
<dbReference type="InterPro" id="IPR002734">
    <property type="entry name" value="RibDG_C"/>
</dbReference>
<dbReference type="InterPro" id="IPR050765">
    <property type="entry name" value="Riboflavin_Biosynth_HTPR"/>
</dbReference>
<dbReference type="NCBIfam" id="TIGR00227">
    <property type="entry name" value="ribD_Cterm"/>
    <property type="match status" value="1"/>
</dbReference>
<dbReference type="PANTHER" id="PTHR38011:SF7">
    <property type="entry name" value="2,5-DIAMINO-6-RIBOSYLAMINO-4(3H)-PYRIMIDINONE 5'-PHOSPHATE REDUCTASE"/>
    <property type="match status" value="1"/>
</dbReference>
<dbReference type="PANTHER" id="PTHR38011">
    <property type="entry name" value="DIHYDROFOLATE REDUCTASE FAMILY PROTEIN (AFU_ORTHOLOGUE AFUA_8G06820)"/>
    <property type="match status" value="1"/>
</dbReference>
<dbReference type="Pfam" id="PF01872">
    <property type="entry name" value="RibD_C"/>
    <property type="match status" value="1"/>
</dbReference>
<dbReference type="SUPFAM" id="SSF53597">
    <property type="entry name" value="Dihydrofolate reductase-like"/>
    <property type="match status" value="1"/>
</dbReference>
<proteinExistence type="inferred from homology"/>
<accession>Q6CJ61</accession>